<organism>
    <name type="scientific">Rotavirus A (isolate RVA/Pig/Australia/TFR-41/1987/G5P9[7])</name>
    <name type="common">RV-A</name>
    <dbReference type="NCBI Taxonomy" id="31581"/>
    <lineage>
        <taxon>Viruses</taxon>
        <taxon>Riboviria</taxon>
        <taxon>Orthornavirae</taxon>
        <taxon>Duplornaviricota</taxon>
        <taxon>Resentoviricetes</taxon>
        <taxon>Reovirales</taxon>
        <taxon>Sedoreoviridae</taxon>
        <taxon>Rotavirus</taxon>
        <taxon>Rotavirus A</taxon>
    </lineage>
</organism>
<accession>P32547</accession>
<evidence type="ECO:0000255" key="1"/>
<evidence type="ECO:0000255" key="2">
    <source>
        <dbReference type="HAMAP-Rule" id="MF_04131"/>
    </source>
</evidence>
<evidence type="ECO:0000305" key="3"/>
<keyword id="KW-0024">Alternative initiation</keyword>
<keyword id="KW-0106">Calcium</keyword>
<keyword id="KW-0167">Capsid protein</keyword>
<keyword id="KW-1015">Disulfide bond</keyword>
<keyword id="KW-0325">Glycoprotein</keyword>
<keyword id="KW-1038">Host endoplasmic reticulum</keyword>
<keyword id="KW-0945">Host-virus interaction</keyword>
<keyword id="KW-0479">Metal-binding</keyword>
<keyword id="KW-1152">Outer capsid protein</keyword>
<keyword id="KW-0732">Signal</keyword>
<keyword id="KW-1146">T=13 icosahedral capsid protein</keyword>
<keyword id="KW-0946">Virion</keyword>
<reference key="1">
    <citation type="journal article" date="1989" name="Arch. Virol.">
        <title>Comparative sequence analysis of VP7 genes from five Australian porcine rotaviruses.</title>
        <authorList>
            <person name="Huang J.A."/>
            <person name="Nagesha H.S."/>
            <person name="Dyall-Smith M.L."/>
            <person name="Holmes I.H."/>
        </authorList>
    </citation>
    <scope>NUCLEOTIDE SEQUENCE</scope>
</reference>
<proteinExistence type="inferred from homology"/>
<protein>
    <recommendedName>
        <fullName evidence="2">Outer capsid glycoprotein VP7</fullName>
    </recommendedName>
</protein>
<comment type="function">
    <text evidence="2">Calcium-binding protein that interacts with rotavirus cell receptors once the initial attachment by VP4 has been achieved. Rotavirus attachment and entry into the host cell probably involves multiple sequential contacts between the outer capsid proteins VP4 and VP7, and the cell receptors. Following entry into the host cell, low intracellular or intravesicular Ca(2+) concentration probably causes the calcium-stabilized VP7 trimers to dissociate from the virion. This step is probably necessary for the membrane-disrupting entry step and the release of VP4, which is locked onto the virion by VP7.</text>
</comment>
<comment type="subunit">
    <text evidence="2">Homotrimer; disulfide-linked. 2 Ca(2+) ions bound at each subunit interface in the trimer hold the trimer together. Interacts with the intermediate capsid protein VP6. Interacts with the outer capsid protein VP5*.</text>
</comment>
<comment type="subcellular location">
    <subcellularLocation>
        <location evidence="2">Virion</location>
    </subcellularLocation>
    <subcellularLocation>
        <location evidence="2">Host endoplasmic reticulum lumen</location>
    </subcellularLocation>
    <text evidence="2">The outer layer contains 780 copies of VP7, grouped as 260 trimers. Immature double-layered particles assembled in the cytoplasm bud across the membrane of the endoplasmic reticulum, acquiring during this process a transient lipid membrane that is modified with the ER resident viral glycoproteins NSP4 and VP7; these enveloped particles also contain VP4. As the particles move towards the interior of the ER cisternae, the transient lipid membrane and the non-structural protein NSP4 are lost, while the virus surface proteins VP4 and VP7 rearrange to form the outermost virus protein layer, yielding mature infectious triple-layered particles.</text>
</comment>
<comment type="alternative products">
    <event type="alternative initiation"/>
    <isoform>
        <id>P32547-1</id>
        <name>1</name>
        <sequence type="displayed"/>
    </isoform>
    <isoform>
        <id>P32547-2</id>
        <name>2</name>
        <sequence type="described" ref="VSP_038608"/>
    </isoform>
</comment>
<comment type="PTM">
    <text evidence="2">N-glycosylated.</text>
</comment>
<comment type="PTM">
    <text evidence="2">The N-terminus is blocked possibly by pyroglutamic acid.</text>
</comment>
<comment type="miscellaneous">
    <text evidence="2">Some rotavirus strains are neuraminidase-sensitive and require sialic acid to attach to the cell surface. Some rotavirus strains are integrin-dependent. Some rotavirus strains depend on ganglioside for their entry into the host cell. Hsp70 also seems to be involved in the entry of some strains.</text>
</comment>
<comment type="miscellaneous">
    <text evidence="2">In group A rotaviruses, VP7 defines the G serotype.</text>
</comment>
<comment type="miscellaneous">
    <molecule>Isoform 2</molecule>
    <text evidence="3">Produced by alternative initiation at Met-30 of isoform 1.</text>
</comment>
<comment type="similarity">
    <text evidence="2">Belongs to the rotavirus VP7 family.</text>
</comment>
<organismHost>
    <name type="scientific">Sus scrofa</name>
    <name type="common">Pig</name>
    <dbReference type="NCBI Taxonomy" id="9823"/>
</organismHost>
<dbReference type="SMR" id="P32547"/>
<dbReference type="GO" id="GO:0044166">
    <property type="term" value="C:host cell endoplasmic reticulum lumen"/>
    <property type="evidence" value="ECO:0007669"/>
    <property type="project" value="UniProtKB-SubCell"/>
</dbReference>
<dbReference type="GO" id="GO:0039621">
    <property type="term" value="C:T=13 icosahedral viral capsid"/>
    <property type="evidence" value="ECO:0007669"/>
    <property type="project" value="UniProtKB-UniRule"/>
</dbReference>
<dbReference type="GO" id="GO:0039624">
    <property type="term" value="C:viral outer capsid"/>
    <property type="evidence" value="ECO:0007669"/>
    <property type="project" value="UniProtKB-UniRule"/>
</dbReference>
<dbReference type="GO" id="GO:0046872">
    <property type="term" value="F:metal ion binding"/>
    <property type="evidence" value="ECO:0007669"/>
    <property type="project" value="UniProtKB-KW"/>
</dbReference>
<dbReference type="Gene3D" id="3.40.50.11130">
    <property type="entry name" value="Glycoprotein VP7, domain 1"/>
    <property type="match status" value="1"/>
</dbReference>
<dbReference type="Gene3D" id="2.60.120.800">
    <property type="entry name" value="Rotavirus outer-layer protein VP7, domain 2"/>
    <property type="match status" value="1"/>
</dbReference>
<dbReference type="HAMAP" id="MF_04130">
    <property type="entry name" value="Rota_VP7"/>
    <property type="match status" value="1"/>
</dbReference>
<dbReference type="HAMAP" id="MF_04131">
    <property type="entry name" value="Rota_VP7_A"/>
    <property type="match status" value="1"/>
</dbReference>
<dbReference type="InterPro" id="IPR001963">
    <property type="entry name" value="VP7"/>
</dbReference>
<dbReference type="InterPro" id="IPR042207">
    <property type="entry name" value="VP7_1"/>
</dbReference>
<dbReference type="InterPro" id="IPR042210">
    <property type="entry name" value="VP7_2"/>
</dbReference>
<dbReference type="Pfam" id="PF00434">
    <property type="entry name" value="VP7"/>
    <property type="match status" value="1"/>
</dbReference>
<name>VP7_ROTP6</name>
<feature type="signal peptide" evidence="2">
    <location>
        <begin position="1"/>
        <end position="50"/>
    </location>
</feature>
<feature type="chain" id="PRO_0000149615" description="Outer capsid glycoprotein VP7" evidence="2">
    <location>
        <begin position="51"/>
        <end position="326"/>
    </location>
</feature>
<feature type="region of interest" description="CNP motif; interaction with ITGAV/ITGB3" evidence="2">
    <location>
        <begin position="165"/>
        <end position="167"/>
    </location>
</feature>
<feature type="region of interest" description="LVD motif; interaction with ITGA4/ITGB1 heterodimer" evidence="2">
    <location>
        <begin position="237"/>
        <end position="239"/>
    </location>
</feature>
<feature type="region of interest" description="GPR motif; interaction with ITGAX/ITGB2" evidence="2">
    <location>
        <begin position="253"/>
        <end position="255"/>
    </location>
</feature>
<feature type="binding site" evidence="2">
    <location>
        <position position="95"/>
    </location>
    <ligand>
        <name>Ca(2+)</name>
        <dbReference type="ChEBI" id="CHEBI:29108"/>
        <label>1</label>
    </ligand>
</feature>
<feature type="binding site" evidence="2">
    <location>
        <position position="177"/>
    </location>
    <ligand>
        <name>Ca(2+)</name>
        <dbReference type="ChEBI" id="CHEBI:29108"/>
        <label>2</label>
    </ligand>
</feature>
<feature type="binding site" evidence="2">
    <location>
        <position position="206"/>
    </location>
    <ligand>
        <name>Ca(2+)</name>
        <dbReference type="ChEBI" id="CHEBI:29108"/>
        <label>1</label>
    </ligand>
</feature>
<feature type="binding site" evidence="2">
    <location>
        <position position="214"/>
    </location>
    <ligand>
        <name>Ca(2+)</name>
        <dbReference type="ChEBI" id="CHEBI:29108"/>
        <label>1</label>
    </ligand>
</feature>
<feature type="binding site" evidence="2">
    <location>
        <position position="216"/>
    </location>
    <ligand>
        <name>Ca(2+)</name>
        <dbReference type="ChEBI" id="CHEBI:29108"/>
        <label>1</label>
    </ligand>
</feature>
<feature type="binding site" evidence="2">
    <location>
        <position position="228"/>
    </location>
    <ligand>
        <name>Ca(2+)</name>
        <dbReference type="ChEBI" id="CHEBI:29108"/>
        <label>2</label>
    </ligand>
</feature>
<feature type="binding site" evidence="2">
    <location>
        <position position="229"/>
    </location>
    <ligand>
        <name>Ca(2+)</name>
        <dbReference type="ChEBI" id="CHEBI:29108"/>
        <label>2</label>
    </ligand>
</feature>
<feature type="binding site" evidence="2">
    <location>
        <position position="231"/>
    </location>
    <ligand>
        <name>Ca(2+)</name>
        <dbReference type="ChEBI" id="CHEBI:29108"/>
        <label>2</label>
    </ligand>
</feature>
<feature type="binding site" evidence="2">
    <location>
        <position position="301"/>
    </location>
    <ligand>
        <name>Ca(2+)</name>
        <dbReference type="ChEBI" id="CHEBI:29108"/>
        <label>2</label>
    </ligand>
</feature>
<feature type="glycosylation site" description="N-linked (GlcNAc...) asparagine; by host" evidence="1">
    <location>
        <position position="69"/>
    </location>
</feature>
<feature type="disulfide bond" evidence="2">
    <location>
        <begin position="82"/>
        <end position="135"/>
    </location>
</feature>
<feature type="disulfide bond" evidence="2">
    <location>
        <begin position="165"/>
        <end position="249"/>
    </location>
</feature>
<feature type="disulfide bond" evidence="2">
    <location>
        <begin position="191"/>
        <end position="244"/>
    </location>
</feature>
<feature type="disulfide bond" evidence="2">
    <location>
        <begin position="196"/>
        <end position="207"/>
    </location>
</feature>
<feature type="splice variant" id="VSP_038608" description="In isoform 2." evidence="3">
    <location>
        <begin position="1"/>
        <end position="29"/>
    </location>
</feature>
<sequence>MYGIEYSTILTFLISLVFINYLLKSVTRTMDFIIYRFLMIVVLLAPIIKAQNYGINLPITGSMDTPYTNSTMSETFLTSTLCLYYPNEAATEIADTKWKETLSQLLLTKGWPTGSVYFKGYADIASFSVEPQLYCDYNIVLMKYDANLQLDMSELADLILNEWLCNPMDITLYYYQQTDEANKWISMGSSCTIKVCPLNTQTLGIGCSTTDTNSFETVANAEKLVITDVVDGVNHKLDVTTNTCTIRNCKKLGPRENVAVIQVGGSNVLDITADPTTAPQTERMMRVNWKKWWQVFYTIVDYVNQIVQAMSKRSRSLNSAAFYYRV</sequence>